<dbReference type="EMBL" id="AE009442">
    <property type="protein sequence ID" value="AAO29840.1"/>
    <property type="molecule type" value="Genomic_DNA"/>
</dbReference>
<dbReference type="RefSeq" id="WP_004087395.1">
    <property type="nucleotide sequence ID" value="NC_004556.1"/>
</dbReference>
<dbReference type="SMR" id="Q87A23"/>
<dbReference type="KEGG" id="xft:PD_2015"/>
<dbReference type="HOGENOM" id="CLU_075939_0_1_6"/>
<dbReference type="Proteomes" id="UP000002516">
    <property type="component" value="Chromosome"/>
</dbReference>
<dbReference type="GO" id="GO:0022625">
    <property type="term" value="C:cytosolic large ribosomal subunit"/>
    <property type="evidence" value="ECO:0007669"/>
    <property type="project" value="TreeGrafter"/>
</dbReference>
<dbReference type="GO" id="GO:0008097">
    <property type="term" value="F:5S rRNA binding"/>
    <property type="evidence" value="ECO:0007669"/>
    <property type="project" value="InterPro"/>
</dbReference>
<dbReference type="GO" id="GO:0003735">
    <property type="term" value="F:structural constituent of ribosome"/>
    <property type="evidence" value="ECO:0007669"/>
    <property type="project" value="InterPro"/>
</dbReference>
<dbReference type="GO" id="GO:0006412">
    <property type="term" value="P:translation"/>
    <property type="evidence" value="ECO:0007669"/>
    <property type="project" value="UniProtKB-UniRule"/>
</dbReference>
<dbReference type="CDD" id="cd00495">
    <property type="entry name" value="Ribosomal_L25_TL5_CTC"/>
    <property type="match status" value="1"/>
</dbReference>
<dbReference type="FunFam" id="2.40.240.10:FF:000002">
    <property type="entry name" value="50S ribosomal protein L25"/>
    <property type="match status" value="1"/>
</dbReference>
<dbReference type="Gene3D" id="2.170.120.20">
    <property type="entry name" value="Ribosomal protein L25, beta domain"/>
    <property type="match status" value="1"/>
</dbReference>
<dbReference type="Gene3D" id="2.40.240.10">
    <property type="entry name" value="Ribosomal Protein L25, Chain P"/>
    <property type="match status" value="1"/>
</dbReference>
<dbReference type="HAMAP" id="MF_01336">
    <property type="entry name" value="Ribosomal_bL25"/>
    <property type="match status" value="1"/>
</dbReference>
<dbReference type="HAMAP" id="MF_01334">
    <property type="entry name" value="Ribosomal_bL25_CTC"/>
    <property type="match status" value="1"/>
</dbReference>
<dbReference type="InterPro" id="IPR020056">
    <property type="entry name" value="Rbsml_bL25/Gln-tRNA_synth_N"/>
</dbReference>
<dbReference type="InterPro" id="IPR011035">
    <property type="entry name" value="Ribosomal_bL25/Gln-tRNA_synth"/>
</dbReference>
<dbReference type="InterPro" id="IPR020057">
    <property type="entry name" value="Ribosomal_bL25_b-dom"/>
</dbReference>
<dbReference type="InterPro" id="IPR037121">
    <property type="entry name" value="Ribosomal_bL25_C"/>
</dbReference>
<dbReference type="InterPro" id="IPR001021">
    <property type="entry name" value="Ribosomal_bL25_long"/>
</dbReference>
<dbReference type="InterPro" id="IPR020055">
    <property type="entry name" value="Ribosomal_bL25_short"/>
</dbReference>
<dbReference type="InterPro" id="IPR029751">
    <property type="entry name" value="Ribosomal_L25_dom"/>
</dbReference>
<dbReference type="InterPro" id="IPR020930">
    <property type="entry name" value="Ribosomal_uL5_bac-type"/>
</dbReference>
<dbReference type="NCBIfam" id="TIGR00731">
    <property type="entry name" value="bL25_bact_ctc"/>
    <property type="match status" value="1"/>
</dbReference>
<dbReference type="NCBIfam" id="NF004128">
    <property type="entry name" value="PRK05618.1-2"/>
    <property type="match status" value="1"/>
</dbReference>
<dbReference type="NCBIfam" id="NF004130">
    <property type="entry name" value="PRK05618.1-5"/>
    <property type="match status" value="1"/>
</dbReference>
<dbReference type="NCBIfam" id="NF004612">
    <property type="entry name" value="PRK05943.1"/>
    <property type="match status" value="1"/>
</dbReference>
<dbReference type="PANTHER" id="PTHR33284">
    <property type="entry name" value="RIBOSOMAL PROTEIN L25/GLN-TRNA SYNTHETASE, ANTI-CODON-BINDING DOMAIN-CONTAINING PROTEIN"/>
    <property type="match status" value="1"/>
</dbReference>
<dbReference type="PANTHER" id="PTHR33284:SF1">
    <property type="entry name" value="RIBOSOMAL PROTEIN L25_GLN-TRNA SYNTHETASE, ANTI-CODON-BINDING DOMAIN-CONTAINING PROTEIN"/>
    <property type="match status" value="1"/>
</dbReference>
<dbReference type="Pfam" id="PF01386">
    <property type="entry name" value="Ribosomal_L25p"/>
    <property type="match status" value="1"/>
</dbReference>
<dbReference type="Pfam" id="PF14693">
    <property type="entry name" value="Ribosomal_TL5_C"/>
    <property type="match status" value="1"/>
</dbReference>
<dbReference type="SUPFAM" id="SSF50715">
    <property type="entry name" value="Ribosomal protein L25-like"/>
    <property type="match status" value="1"/>
</dbReference>
<reference key="1">
    <citation type="journal article" date="2003" name="J. Bacteriol.">
        <title>Comparative analyses of the complete genome sequences of Pierce's disease and citrus variegated chlorosis strains of Xylella fastidiosa.</title>
        <authorList>
            <person name="Van Sluys M.A."/>
            <person name="de Oliveira M.C."/>
            <person name="Monteiro-Vitorello C.B."/>
            <person name="Miyaki C.Y."/>
            <person name="Furlan L.R."/>
            <person name="Camargo L.E.A."/>
            <person name="da Silva A.C.R."/>
            <person name="Moon D.H."/>
            <person name="Takita M.A."/>
            <person name="Lemos E.G.M."/>
            <person name="Machado M.A."/>
            <person name="Ferro M.I.T."/>
            <person name="da Silva F.R."/>
            <person name="Goldman M.H.S."/>
            <person name="Goldman G.H."/>
            <person name="Lemos M.V.F."/>
            <person name="El-Dorry H."/>
            <person name="Tsai S.M."/>
            <person name="Carrer H."/>
            <person name="Carraro D.M."/>
            <person name="de Oliveira R.C."/>
            <person name="Nunes L.R."/>
            <person name="Siqueira W.J."/>
            <person name="Coutinho L.L."/>
            <person name="Kimura E.T."/>
            <person name="Ferro E.S."/>
            <person name="Harakava R."/>
            <person name="Kuramae E.E."/>
            <person name="Marino C.L."/>
            <person name="Giglioti E."/>
            <person name="Abreu I.L."/>
            <person name="Alves L.M.C."/>
            <person name="do Amaral A.M."/>
            <person name="Baia G.S."/>
            <person name="Blanco S.R."/>
            <person name="Brito M.S."/>
            <person name="Cannavan F.S."/>
            <person name="Celestino A.V."/>
            <person name="da Cunha A.F."/>
            <person name="Fenille R.C."/>
            <person name="Ferro J.A."/>
            <person name="Formighieri E.F."/>
            <person name="Kishi L.T."/>
            <person name="Leoni S.G."/>
            <person name="Oliveira A.R."/>
            <person name="Rosa V.E. Jr."/>
            <person name="Sassaki F.T."/>
            <person name="Sena J.A.D."/>
            <person name="de Souza A.A."/>
            <person name="Truffi D."/>
            <person name="Tsukumo F."/>
            <person name="Yanai G.M."/>
            <person name="Zaros L.G."/>
            <person name="Civerolo E.L."/>
            <person name="Simpson A.J.G."/>
            <person name="Almeida N.F. Jr."/>
            <person name="Setubal J.C."/>
            <person name="Kitajima J.P."/>
        </authorList>
    </citation>
    <scope>NUCLEOTIDE SEQUENCE [LARGE SCALE GENOMIC DNA]</scope>
    <source>
        <strain>Temecula1 / ATCC 700964</strain>
    </source>
</reference>
<sequence length="207" mass="22985">MANHQIKAQRRKDEGKGASRRLRHAGMIPAIIYGGEQRPVSIQLNHEQIWLAQQNEWFYSSILDLNVDGAGAEKVLLRDLQRHPYRQLVMHVDFQRVSSDAKLSVAVPLHFINQATSPAGKVGGVVITHELNEVQVSCLPKDLPEFIEVDLSTLNVGHVIHLSDITFPIGVELSTRLDKEHDMAVVIAKHAVIEDDAPAEEGEGDSK</sequence>
<accession>Q87A23</accession>
<gene>
    <name evidence="1" type="primary">rplY</name>
    <name evidence="1" type="synonym">ctc</name>
    <name type="ordered locus">PD_2015</name>
</gene>
<name>RL25_XYLFT</name>
<proteinExistence type="inferred from homology"/>
<protein>
    <recommendedName>
        <fullName evidence="1">Large ribosomal subunit protein bL25</fullName>
    </recommendedName>
    <alternativeName>
        <fullName evidence="3">50S ribosomal protein L25</fullName>
    </alternativeName>
    <alternativeName>
        <fullName evidence="1">General stress protein CTC</fullName>
    </alternativeName>
</protein>
<keyword id="KW-1185">Reference proteome</keyword>
<keyword id="KW-0687">Ribonucleoprotein</keyword>
<keyword id="KW-0689">Ribosomal protein</keyword>
<keyword id="KW-0694">RNA-binding</keyword>
<keyword id="KW-0699">rRNA-binding</keyword>
<feature type="chain" id="PRO_0000181622" description="Large ribosomal subunit protein bL25">
    <location>
        <begin position="1"/>
        <end position="207"/>
    </location>
</feature>
<feature type="region of interest" description="Disordered" evidence="2">
    <location>
        <begin position="1"/>
        <end position="20"/>
    </location>
</feature>
<organism>
    <name type="scientific">Xylella fastidiosa (strain Temecula1 / ATCC 700964)</name>
    <dbReference type="NCBI Taxonomy" id="183190"/>
    <lineage>
        <taxon>Bacteria</taxon>
        <taxon>Pseudomonadati</taxon>
        <taxon>Pseudomonadota</taxon>
        <taxon>Gammaproteobacteria</taxon>
        <taxon>Lysobacterales</taxon>
        <taxon>Lysobacteraceae</taxon>
        <taxon>Xylella</taxon>
    </lineage>
</organism>
<evidence type="ECO:0000255" key="1">
    <source>
        <dbReference type="HAMAP-Rule" id="MF_01334"/>
    </source>
</evidence>
<evidence type="ECO:0000256" key="2">
    <source>
        <dbReference type="SAM" id="MobiDB-lite"/>
    </source>
</evidence>
<evidence type="ECO:0000305" key="3"/>
<comment type="function">
    <text evidence="1">This is one of the proteins that binds to the 5S RNA in the ribosome where it forms part of the central protuberance.</text>
</comment>
<comment type="subunit">
    <text evidence="1">Part of the 50S ribosomal subunit; part of the 5S rRNA/L5/L18/L25 subcomplex. Contacts the 5S rRNA. Binds to the 5S rRNA independently of L5 and L18.</text>
</comment>
<comment type="similarity">
    <text evidence="1">Belongs to the bacterial ribosomal protein bL25 family. CTC subfamily.</text>
</comment>